<accession>Q741G5</accession>
<name>METK_MYCPA</name>
<protein>
    <recommendedName>
        <fullName evidence="1">S-adenosylmethionine synthase</fullName>
        <shortName evidence="1">AdoMet synthase</shortName>
        <ecNumber evidence="1">2.5.1.6</ecNumber>
    </recommendedName>
    <alternativeName>
        <fullName evidence="1">MAT</fullName>
    </alternativeName>
    <alternativeName>
        <fullName evidence="1">Methionine adenosyltransferase</fullName>
    </alternativeName>
</protein>
<dbReference type="EC" id="2.5.1.6" evidence="1"/>
<dbReference type="EMBL" id="AE016958">
    <property type="protein sequence ID" value="AAS03443.1"/>
    <property type="molecule type" value="Genomic_DNA"/>
</dbReference>
<dbReference type="RefSeq" id="WP_003872553.1">
    <property type="nucleotide sequence ID" value="NZ_CP106873.1"/>
</dbReference>
<dbReference type="SMR" id="Q741G5"/>
<dbReference type="STRING" id="262316.MAP_1126"/>
<dbReference type="KEGG" id="mpa:MAP_1126"/>
<dbReference type="eggNOG" id="COG0192">
    <property type="taxonomic scope" value="Bacteria"/>
</dbReference>
<dbReference type="HOGENOM" id="CLU_041802_1_1_11"/>
<dbReference type="UniPathway" id="UPA00315">
    <property type="reaction ID" value="UER00080"/>
</dbReference>
<dbReference type="Proteomes" id="UP000000580">
    <property type="component" value="Chromosome"/>
</dbReference>
<dbReference type="GO" id="GO:0005737">
    <property type="term" value="C:cytoplasm"/>
    <property type="evidence" value="ECO:0007669"/>
    <property type="project" value="UniProtKB-SubCell"/>
</dbReference>
<dbReference type="GO" id="GO:0005524">
    <property type="term" value="F:ATP binding"/>
    <property type="evidence" value="ECO:0007669"/>
    <property type="project" value="UniProtKB-UniRule"/>
</dbReference>
<dbReference type="GO" id="GO:0000287">
    <property type="term" value="F:magnesium ion binding"/>
    <property type="evidence" value="ECO:0007669"/>
    <property type="project" value="UniProtKB-UniRule"/>
</dbReference>
<dbReference type="GO" id="GO:0004478">
    <property type="term" value="F:methionine adenosyltransferase activity"/>
    <property type="evidence" value="ECO:0007669"/>
    <property type="project" value="UniProtKB-UniRule"/>
</dbReference>
<dbReference type="GO" id="GO:0006730">
    <property type="term" value="P:one-carbon metabolic process"/>
    <property type="evidence" value="ECO:0007669"/>
    <property type="project" value="UniProtKB-KW"/>
</dbReference>
<dbReference type="GO" id="GO:0006556">
    <property type="term" value="P:S-adenosylmethionine biosynthetic process"/>
    <property type="evidence" value="ECO:0007669"/>
    <property type="project" value="UniProtKB-UniRule"/>
</dbReference>
<dbReference type="CDD" id="cd18079">
    <property type="entry name" value="S-AdoMet_synt"/>
    <property type="match status" value="1"/>
</dbReference>
<dbReference type="FunFam" id="3.30.300.10:FF:000006">
    <property type="entry name" value="S-adenosylmethionine synthase"/>
    <property type="match status" value="1"/>
</dbReference>
<dbReference type="Gene3D" id="3.30.300.10">
    <property type="match status" value="3"/>
</dbReference>
<dbReference type="HAMAP" id="MF_00086">
    <property type="entry name" value="S_AdoMet_synth1"/>
    <property type="match status" value="1"/>
</dbReference>
<dbReference type="InterPro" id="IPR022631">
    <property type="entry name" value="ADOMET_SYNTHASE_CS"/>
</dbReference>
<dbReference type="InterPro" id="IPR022630">
    <property type="entry name" value="S-AdoMet_synt_C"/>
</dbReference>
<dbReference type="InterPro" id="IPR022629">
    <property type="entry name" value="S-AdoMet_synt_central"/>
</dbReference>
<dbReference type="InterPro" id="IPR022628">
    <property type="entry name" value="S-AdoMet_synt_N"/>
</dbReference>
<dbReference type="InterPro" id="IPR002133">
    <property type="entry name" value="S-AdoMet_synthetase"/>
</dbReference>
<dbReference type="InterPro" id="IPR022636">
    <property type="entry name" value="S-AdoMet_synthetase_sfam"/>
</dbReference>
<dbReference type="NCBIfam" id="TIGR01034">
    <property type="entry name" value="metK"/>
    <property type="match status" value="1"/>
</dbReference>
<dbReference type="PANTHER" id="PTHR11964">
    <property type="entry name" value="S-ADENOSYLMETHIONINE SYNTHETASE"/>
    <property type="match status" value="1"/>
</dbReference>
<dbReference type="Pfam" id="PF02773">
    <property type="entry name" value="S-AdoMet_synt_C"/>
    <property type="match status" value="1"/>
</dbReference>
<dbReference type="Pfam" id="PF02772">
    <property type="entry name" value="S-AdoMet_synt_M"/>
    <property type="match status" value="1"/>
</dbReference>
<dbReference type="Pfam" id="PF00438">
    <property type="entry name" value="S-AdoMet_synt_N"/>
    <property type="match status" value="1"/>
</dbReference>
<dbReference type="PIRSF" id="PIRSF000497">
    <property type="entry name" value="MAT"/>
    <property type="match status" value="1"/>
</dbReference>
<dbReference type="SUPFAM" id="SSF55973">
    <property type="entry name" value="S-adenosylmethionine synthetase"/>
    <property type="match status" value="3"/>
</dbReference>
<dbReference type="PROSITE" id="PS00376">
    <property type="entry name" value="ADOMET_SYNTHASE_1"/>
    <property type="match status" value="1"/>
</dbReference>
<dbReference type="PROSITE" id="PS00377">
    <property type="entry name" value="ADOMET_SYNTHASE_2"/>
    <property type="match status" value="1"/>
</dbReference>
<evidence type="ECO:0000255" key="1">
    <source>
        <dbReference type="HAMAP-Rule" id="MF_00086"/>
    </source>
</evidence>
<reference key="1">
    <citation type="journal article" date="2005" name="Proc. Natl. Acad. Sci. U.S.A.">
        <title>The complete genome sequence of Mycobacterium avium subspecies paratuberculosis.</title>
        <authorList>
            <person name="Li L."/>
            <person name="Bannantine J.P."/>
            <person name="Zhang Q."/>
            <person name="Amonsin A."/>
            <person name="May B.J."/>
            <person name="Alt D."/>
            <person name="Banerji N."/>
            <person name="Kanjilal S."/>
            <person name="Kapur V."/>
        </authorList>
    </citation>
    <scope>NUCLEOTIDE SEQUENCE [LARGE SCALE GENOMIC DNA]</scope>
    <source>
        <strain>ATCC BAA-968 / K-10</strain>
    </source>
</reference>
<sequence>MSEKGRLFTSESVTEGHPDKICDAISDSVLDALLAQDPRSRVAVETLVTTGQVHVVGEVTTTAKEAFADITNTVRERILDIGYDSSDKGFDGASCGVNIGIGAQSPDIAQGVDTAHETRVEGAADPLDAQGAGDQGLMFGYAIKDTPEMMPLPIALAHRLSRRLTEVRKSGVLPYLRPDGKTQVTIEYEDDVPVRLDTVVVSTQHAADIDLENTLTPDIREKVLNTVLDDLAHDTLDTSSTRLLVNPTGKFVVGGPMGDAGLTGRKIIVDTYGGWARHGGGAFSGKDPSKVDRSAAYAMRWVAKNIVAAGLAERVEVQVAYAIGKAAPVGLFVETFGTATVDPVKIEKIVPEVFDLRPGAIIRDLDLLRPIYAQTAAYGHFGRTDVELPWEQLNKVDELKRAV</sequence>
<proteinExistence type="inferred from homology"/>
<organism>
    <name type="scientific">Mycolicibacterium paratuberculosis (strain ATCC BAA-968 / K-10)</name>
    <name type="common">Mycobacterium paratuberculosis</name>
    <dbReference type="NCBI Taxonomy" id="262316"/>
    <lineage>
        <taxon>Bacteria</taxon>
        <taxon>Bacillati</taxon>
        <taxon>Actinomycetota</taxon>
        <taxon>Actinomycetes</taxon>
        <taxon>Mycobacteriales</taxon>
        <taxon>Mycobacteriaceae</taxon>
        <taxon>Mycobacterium</taxon>
        <taxon>Mycobacterium avium complex (MAC)</taxon>
    </lineage>
</organism>
<gene>
    <name evidence="1" type="primary">metK</name>
    <name type="ordered locus">MAP_1126</name>
</gene>
<feature type="chain" id="PRO_0000174552" description="S-adenosylmethionine synthase">
    <location>
        <begin position="1"/>
        <end position="403"/>
    </location>
</feature>
<feature type="region of interest" description="Flexible loop" evidence="1">
    <location>
        <begin position="104"/>
        <end position="114"/>
    </location>
</feature>
<feature type="binding site" description="in other chain" evidence="1">
    <location>
        <position position="17"/>
    </location>
    <ligand>
        <name>ATP</name>
        <dbReference type="ChEBI" id="CHEBI:30616"/>
        <note>ligand shared between two neighboring subunits</note>
    </ligand>
</feature>
<feature type="binding site" evidence="1">
    <location>
        <position position="19"/>
    </location>
    <ligand>
        <name>Mg(2+)</name>
        <dbReference type="ChEBI" id="CHEBI:18420"/>
    </ligand>
</feature>
<feature type="binding site" evidence="1">
    <location>
        <position position="45"/>
    </location>
    <ligand>
        <name>K(+)</name>
        <dbReference type="ChEBI" id="CHEBI:29103"/>
    </ligand>
</feature>
<feature type="binding site" description="in other chain" evidence="1">
    <location>
        <position position="58"/>
    </location>
    <ligand>
        <name>L-methionine</name>
        <dbReference type="ChEBI" id="CHEBI:57844"/>
        <note>ligand shared between two neighboring subunits</note>
    </ligand>
</feature>
<feature type="binding site" description="in other chain" evidence="1">
    <location>
        <position position="104"/>
    </location>
    <ligand>
        <name>L-methionine</name>
        <dbReference type="ChEBI" id="CHEBI:57844"/>
        <note>ligand shared between two neighboring subunits</note>
    </ligand>
</feature>
<feature type="binding site" description="in other chain" evidence="1">
    <location>
        <begin position="179"/>
        <end position="181"/>
    </location>
    <ligand>
        <name>ATP</name>
        <dbReference type="ChEBI" id="CHEBI:30616"/>
        <note>ligand shared between two neighboring subunits</note>
    </ligand>
</feature>
<feature type="binding site" description="in other chain" evidence="1">
    <location>
        <begin position="250"/>
        <end position="251"/>
    </location>
    <ligand>
        <name>ATP</name>
        <dbReference type="ChEBI" id="CHEBI:30616"/>
        <note>ligand shared between two neighboring subunits</note>
    </ligand>
</feature>
<feature type="binding site" evidence="1">
    <location>
        <position position="259"/>
    </location>
    <ligand>
        <name>ATP</name>
        <dbReference type="ChEBI" id="CHEBI:30616"/>
        <note>ligand shared between two neighboring subunits</note>
    </ligand>
</feature>
<feature type="binding site" evidence="1">
    <location>
        <position position="259"/>
    </location>
    <ligand>
        <name>L-methionine</name>
        <dbReference type="ChEBI" id="CHEBI:57844"/>
        <note>ligand shared between two neighboring subunits</note>
    </ligand>
</feature>
<feature type="binding site" description="in other chain" evidence="1">
    <location>
        <begin position="265"/>
        <end position="266"/>
    </location>
    <ligand>
        <name>ATP</name>
        <dbReference type="ChEBI" id="CHEBI:30616"/>
        <note>ligand shared between two neighboring subunits</note>
    </ligand>
</feature>
<feature type="binding site" evidence="1">
    <location>
        <position position="282"/>
    </location>
    <ligand>
        <name>ATP</name>
        <dbReference type="ChEBI" id="CHEBI:30616"/>
        <note>ligand shared between two neighboring subunits</note>
    </ligand>
</feature>
<feature type="binding site" evidence="1">
    <location>
        <position position="286"/>
    </location>
    <ligand>
        <name>ATP</name>
        <dbReference type="ChEBI" id="CHEBI:30616"/>
        <note>ligand shared between two neighboring subunits</note>
    </ligand>
</feature>
<feature type="binding site" description="in other chain" evidence="1">
    <location>
        <position position="290"/>
    </location>
    <ligand>
        <name>L-methionine</name>
        <dbReference type="ChEBI" id="CHEBI:57844"/>
        <note>ligand shared between two neighboring subunits</note>
    </ligand>
</feature>
<keyword id="KW-0067">ATP-binding</keyword>
<keyword id="KW-0963">Cytoplasm</keyword>
<keyword id="KW-0460">Magnesium</keyword>
<keyword id="KW-0479">Metal-binding</keyword>
<keyword id="KW-0547">Nucleotide-binding</keyword>
<keyword id="KW-0554">One-carbon metabolism</keyword>
<keyword id="KW-0630">Potassium</keyword>
<keyword id="KW-1185">Reference proteome</keyword>
<keyword id="KW-0808">Transferase</keyword>
<comment type="function">
    <text evidence="1">Catalyzes the formation of S-adenosylmethionine (AdoMet) from methionine and ATP. The overall synthetic reaction is composed of two sequential steps, AdoMet formation and the subsequent tripolyphosphate hydrolysis which occurs prior to release of AdoMet from the enzyme.</text>
</comment>
<comment type="catalytic activity">
    <reaction evidence="1">
        <text>L-methionine + ATP + H2O = S-adenosyl-L-methionine + phosphate + diphosphate</text>
        <dbReference type="Rhea" id="RHEA:21080"/>
        <dbReference type="ChEBI" id="CHEBI:15377"/>
        <dbReference type="ChEBI" id="CHEBI:30616"/>
        <dbReference type="ChEBI" id="CHEBI:33019"/>
        <dbReference type="ChEBI" id="CHEBI:43474"/>
        <dbReference type="ChEBI" id="CHEBI:57844"/>
        <dbReference type="ChEBI" id="CHEBI:59789"/>
        <dbReference type="EC" id="2.5.1.6"/>
    </reaction>
</comment>
<comment type="cofactor">
    <cofactor evidence="1">
        <name>Mg(2+)</name>
        <dbReference type="ChEBI" id="CHEBI:18420"/>
    </cofactor>
    <text evidence="1">Binds 2 divalent ions per subunit.</text>
</comment>
<comment type="cofactor">
    <cofactor evidence="1">
        <name>K(+)</name>
        <dbReference type="ChEBI" id="CHEBI:29103"/>
    </cofactor>
    <text evidence="1">Binds 1 potassium ion per subunit.</text>
</comment>
<comment type="pathway">
    <text evidence="1">Amino-acid biosynthesis; S-adenosyl-L-methionine biosynthesis; S-adenosyl-L-methionine from L-methionine: step 1/1.</text>
</comment>
<comment type="subunit">
    <text evidence="1">Homotetramer; dimer of dimers.</text>
</comment>
<comment type="subcellular location">
    <subcellularLocation>
        <location evidence="1">Cytoplasm</location>
    </subcellularLocation>
</comment>
<comment type="similarity">
    <text evidence="1">Belongs to the AdoMet synthase family.</text>
</comment>